<protein>
    <recommendedName>
        <fullName>Protein strawberry notch homolog 1</fullName>
    </recommendedName>
    <alternativeName>
        <fullName>Monocyte protein 3</fullName>
        <shortName>MOP-3</shortName>
    </alternativeName>
</protein>
<organism>
    <name type="scientific">Homo sapiens</name>
    <name type="common">Human</name>
    <dbReference type="NCBI Taxonomy" id="9606"/>
    <lineage>
        <taxon>Eukaryota</taxon>
        <taxon>Metazoa</taxon>
        <taxon>Chordata</taxon>
        <taxon>Craniata</taxon>
        <taxon>Vertebrata</taxon>
        <taxon>Euteleostomi</taxon>
        <taxon>Mammalia</taxon>
        <taxon>Eutheria</taxon>
        <taxon>Euarchontoglires</taxon>
        <taxon>Primates</taxon>
        <taxon>Haplorrhini</taxon>
        <taxon>Catarrhini</taxon>
        <taxon>Hominidae</taxon>
        <taxon>Homo</taxon>
    </lineage>
</organism>
<sequence>MVEPGQDLLLAALSESGISPNDLFDIDGGDAGLATPMPTPSVQQSVPLSALELGLETEAAVPVKQEPETVPTPALLNVRQQPPSTTTFVLNQINHLPPLGSTIVMTKTPPVTTNRQTITLTKFIQTTASTRPSVSAPTVRNAMTSAPSKDQVQLKDLLKNNSLNELMKLKPPANIAQPVATAATDVSNGTVKKESSNKEGARMWINDMKMRSFSPTMKVPVVKEDDEPEEEDEEEMGHAETYAEYMPIKLKIGLRHPDAVVETSSLSSVTPPDVWYKTSISEETIDNGWLSALQLEAITYAAQQHETFLPNGDRAGFLIGDGAGVGKGRTIAGIIYENYLLSRKRALWFSVSNDLKYDAERDLRDIGAKNILVHSLNKFKYGKISSKHNGSVKKGVIFATYSSLIGESQSGGKYKTRLKQLLHWCGDDFDGVIVFDECHKAKNLCPVGSSKPTKTGLAVLELQNKLPKARVVYASATGASEPRNMAYMNRLGIWGEGTPFREFSDFIQAVERRGVGAMEIVAMDMKLRGMYIARQLSFTGVTFKIEEVLLSQSYVKMYNKAVKLWVIARERFQQAADLIDAEQRMKKSMWGQFWSAHQRFFKYLCIASKVKRVVQLAREEIKNGKCVVIGLQSTGEARTLEALEEGGGELNDFVSTAKGVLQSLIEKHFPAPDRKKLYSLLGIDLTAPSNNSSPRDSPCKENKIKKRKGEEITREAKKARKVGGLTGSSSDDSGSESDASDNEESDYESSKNMSSGDDDDFNPFLDESNEDDENDPWLIRKDHKKNKEKKKKKSIDPDSIQSALLASGLGSKRPSFSSTPVISPAPNSTPANSNTNSNSSLITSQDAVERAQQMKKDLLDKLEKLAEDLPPNTLDELIDELGGPENVAEMTGRKGRVVSNDDGSISYESRSELDVPVEILNITEKQRFMDGDKNIAIISEAASSGISLQADRRAKNQRRRVHMTLELPWSADRAIQQFGRTHRSNQVTAPEYVFLISELAGEQRFASIVAKRLESLGALTHGDRRATESRDLSRFNFDNKYGRNALEIVMKSIVNLDSPMVSPPPDYPGEFFKDVRQGLIGVGLINVEDRSGILTLDKDYNNIGKFLNRILGMEVHQQNALFQYFADTLTAVVQNAKKNGRYDMGILDLGSGDEKVRKSDVKKFLTPGYSTSGHVELYTISVERGMSWEEATKIWAELTGPDDGFYLSLQIRNNKKTAILVKEVNPKKKLFLVYRPNTGKQLKLEIYADLKKKYKKVVSDDALMHWLDQYNSSADTCTHAYWRGNCKKASLGLVCEIGLRCRTYYVLCGSVLSVWTKVEGVLASVSGTNVKMQIVRLRTEDGQRIVGLIIPANCVSPLVNLLSTSDQSQQLAVQQKQLWQQHHPQSITNLSNA</sequence>
<comment type="function">
    <text evidence="1">Plays a crucial role in the regulation of neural stem cells (NSCs) proliferation. Enhances the phosphorylation of GSK3B through the PI3K-Akt signaling pathway, thereby upregulating the Wnt/beta-catenin signaling pathway and promoting the proliferation of NSCs. Improves ischemic stroke recovery while inhibiting neuroinflammation through small extracellular vesicles (sEVs)-mediated mechanism. Enhances the secretion of sEVs from NSCs, which in turn inhibit both the MAPK and NF-kappaB pathways in microglia. This inhibition suppresses the pro-inflammatory M1 polarization of microglia, promoting a shift towards the M2 anti-inflammatory phenotype, which is beneficial for reducing neuroinflammation.</text>
</comment>
<comment type="subcellular location">
    <subcellularLocation>
        <location evidence="1">Nucleus</location>
    </subcellularLocation>
</comment>
<comment type="alternative products">
    <event type="alternative splicing"/>
    <isoform>
        <id>A3KN83-1</id>
        <name>1</name>
        <sequence type="displayed"/>
    </isoform>
    <isoform>
        <id>A3KN83-2</id>
        <name>2</name>
        <sequence type="described" ref="VSP_030296"/>
    </isoform>
    <isoform>
        <id>A3KN83-3</id>
        <name>3</name>
        <sequence type="described" ref="VSP_030295"/>
    </isoform>
    <isoform>
        <id>A3KN83-4</id>
        <name>4</name>
        <sequence type="described" ref="VSP_030296 VSP_030297 VSP_030298"/>
    </isoform>
</comment>
<comment type="similarity">
    <text evidence="9">Belongs to the SBNO family.</text>
</comment>
<comment type="sequence caution" evidence="9">
    <conflict type="erroneous initiation">
        <sequence resource="EMBL-CDS" id="AAQ76814"/>
    </conflict>
    <text>Truncated N-terminus.</text>
</comment>
<dbReference type="EMBL" id="AB014772">
    <property type="protein sequence ID" value="BAB19784.1"/>
    <property type="molecule type" value="mRNA"/>
</dbReference>
<dbReference type="EMBL" id="BC030544">
    <property type="protein sequence ID" value="AAH30544.1"/>
    <property type="molecule type" value="mRNA"/>
</dbReference>
<dbReference type="EMBL" id="BC133704">
    <property type="protein sequence ID" value="AAI33705.1"/>
    <property type="molecule type" value="mRNA"/>
</dbReference>
<dbReference type="EMBL" id="AK001695">
    <property type="protein sequence ID" value="BAA91842.1"/>
    <property type="molecule type" value="mRNA"/>
</dbReference>
<dbReference type="EMBL" id="AY364255">
    <property type="protein sequence ID" value="AAQ76814.1"/>
    <property type="status" value="ALT_INIT"/>
    <property type="molecule type" value="mRNA"/>
</dbReference>
<dbReference type="CCDS" id="CCDS53844.1">
    <molecule id="A3KN83-1"/>
</dbReference>
<dbReference type="CCDS" id="CCDS9246.1">
    <molecule id="A3KN83-2"/>
</dbReference>
<dbReference type="RefSeq" id="NP_001161328.1">
    <molecule id="A3KN83-1"/>
    <property type="nucleotide sequence ID" value="NM_001167856.3"/>
</dbReference>
<dbReference type="RefSeq" id="NP_060653.3">
    <molecule id="A3KN83-2"/>
    <property type="nucleotide sequence ID" value="NM_018183.4"/>
</dbReference>
<dbReference type="RefSeq" id="XP_005253630.1">
    <property type="nucleotide sequence ID" value="XM_005253573.4"/>
</dbReference>
<dbReference type="RefSeq" id="XP_005253633.1">
    <property type="nucleotide sequence ID" value="XM_005253576.3"/>
</dbReference>
<dbReference type="RefSeq" id="XP_006719536.1">
    <property type="nucleotide sequence ID" value="XM_006719473.3"/>
</dbReference>
<dbReference type="RefSeq" id="XP_006719537.1">
    <property type="nucleotide sequence ID" value="XM_006719474.3"/>
</dbReference>
<dbReference type="RefSeq" id="XP_011536835.1">
    <property type="nucleotide sequence ID" value="XM_011538533.2"/>
</dbReference>
<dbReference type="RefSeq" id="XP_016875045.1">
    <property type="nucleotide sequence ID" value="XM_017019556.1"/>
</dbReference>
<dbReference type="BioGRID" id="120502">
    <property type="interactions" value="80"/>
</dbReference>
<dbReference type="CORUM" id="A3KN83"/>
<dbReference type="FunCoup" id="A3KN83">
    <property type="interactions" value="1818"/>
</dbReference>
<dbReference type="IntAct" id="A3KN83">
    <property type="interactions" value="47"/>
</dbReference>
<dbReference type="MINT" id="A3KN83"/>
<dbReference type="STRING" id="9606.ENSP00000473665"/>
<dbReference type="GlyConnect" id="2874">
    <property type="glycosylation" value="1 O-GlcNAc glycan (1 site)"/>
</dbReference>
<dbReference type="GlyCosmos" id="A3KN83">
    <property type="glycosylation" value="10 sites, 2 glycans"/>
</dbReference>
<dbReference type="GlyGen" id="A3KN83">
    <property type="glycosylation" value="17 sites, 2 O-linked glycans (14 sites)"/>
</dbReference>
<dbReference type="iPTMnet" id="A3KN83"/>
<dbReference type="MetOSite" id="A3KN83"/>
<dbReference type="PhosphoSitePlus" id="A3KN83"/>
<dbReference type="BioMuta" id="SBNO1"/>
<dbReference type="jPOST" id="A3KN83"/>
<dbReference type="MassIVE" id="A3KN83"/>
<dbReference type="PaxDb" id="9606-ENSP00000387361"/>
<dbReference type="PeptideAtlas" id="A3KN83"/>
<dbReference type="ProteomicsDB" id="582">
    <molecule id="A3KN83-1"/>
</dbReference>
<dbReference type="ProteomicsDB" id="583">
    <molecule id="A3KN83-2"/>
</dbReference>
<dbReference type="ProteomicsDB" id="584">
    <molecule id="A3KN83-3"/>
</dbReference>
<dbReference type="ProteomicsDB" id="585">
    <molecule id="A3KN83-4"/>
</dbReference>
<dbReference type="Pumba" id="A3KN83"/>
<dbReference type="Antibodypedia" id="52514">
    <property type="antibodies" value="38 antibodies from 15 providers"/>
</dbReference>
<dbReference type="DNASU" id="55206"/>
<dbReference type="Ensembl" id="ENST00000267176.8">
    <molecule id="A3KN83-2"/>
    <property type="protein sequence ID" value="ENSP00000267176.4"/>
    <property type="gene ID" value="ENSG00000139697.14"/>
</dbReference>
<dbReference type="Ensembl" id="ENST00000420886.6">
    <molecule id="A3KN83-1"/>
    <property type="protein sequence ID" value="ENSP00000387361.2"/>
    <property type="gene ID" value="ENSG00000139697.14"/>
</dbReference>
<dbReference type="Ensembl" id="ENST00000602398.3">
    <molecule id="A3KN83-1"/>
    <property type="protein sequence ID" value="ENSP00000473665.1"/>
    <property type="gene ID" value="ENSG00000139697.14"/>
</dbReference>
<dbReference type="GeneID" id="55206"/>
<dbReference type="KEGG" id="hsa:55206"/>
<dbReference type="MANE-Select" id="ENST00000602398.3">
    <property type="protein sequence ID" value="ENSP00000473665.1"/>
    <property type="RefSeq nucleotide sequence ID" value="NM_001167856.3"/>
    <property type="RefSeq protein sequence ID" value="NP_001161328.1"/>
</dbReference>
<dbReference type="UCSC" id="uc010tao.3">
    <molecule id="A3KN83-1"/>
    <property type="organism name" value="human"/>
</dbReference>
<dbReference type="AGR" id="HGNC:22973"/>
<dbReference type="CTD" id="55206"/>
<dbReference type="DisGeNET" id="55206"/>
<dbReference type="GeneCards" id="SBNO1"/>
<dbReference type="HGNC" id="HGNC:22973">
    <property type="gene designation" value="SBNO1"/>
</dbReference>
<dbReference type="HPA" id="ENSG00000139697">
    <property type="expression patterns" value="Tissue enhanced (testis)"/>
</dbReference>
<dbReference type="MalaCards" id="SBNO1"/>
<dbReference type="neXtProt" id="NX_A3KN83"/>
<dbReference type="OpenTargets" id="ENSG00000139697"/>
<dbReference type="PharmGKB" id="PA134967986"/>
<dbReference type="VEuPathDB" id="HostDB:ENSG00000139697"/>
<dbReference type="eggNOG" id="KOG1513">
    <property type="taxonomic scope" value="Eukaryota"/>
</dbReference>
<dbReference type="GeneTree" id="ENSGT00940000155449"/>
<dbReference type="HOGENOM" id="CLU_000212_2_2_1"/>
<dbReference type="InParanoid" id="A3KN83"/>
<dbReference type="OMA" id="KLWMEAR"/>
<dbReference type="OrthoDB" id="421838at2759"/>
<dbReference type="PAN-GO" id="A3KN83">
    <property type="GO annotations" value="4 GO annotations based on evolutionary models"/>
</dbReference>
<dbReference type="PhylomeDB" id="A3KN83"/>
<dbReference type="TreeFam" id="TF313526"/>
<dbReference type="PathwayCommons" id="A3KN83"/>
<dbReference type="SignaLink" id="A3KN83"/>
<dbReference type="BioGRID-ORCS" id="55206">
    <property type="hits" value="715 hits in 1168 CRISPR screens"/>
</dbReference>
<dbReference type="ChiTaRS" id="SBNO1">
    <property type="organism name" value="human"/>
</dbReference>
<dbReference type="GenomeRNAi" id="55206"/>
<dbReference type="Pharos" id="A3KN83">
    <property type="development level" value="Tdark"/>
</dbReference>
<dbReference type="PRO" id="PR:A3KN83"/>
<dbReference type="Proteomes" id="UP000005640">
    <property type="component" value="Chromosome 12"/>
</dbReference>
<dbReference type="RNAct" id="A3KN83">
    <property type="molecule type" value="protein"/>
</dbReference>
<dbReference type="Bgee" id="ENSG00000139697">
    <property type="expression patterns" value="Expressed in male germ line stem cell (sensu Vertebrata) in testis and 197 other cell types or tissues"/>
</dbReference>
<dbReference type="GO" id="GO:0005634">
    <property type="term" value="C:nucleus"/>
    <property type="evidence" value="ECO:0000250"/>
    <property type="project" value="UniProtKB"/>
</dbReference>
<dbReference type="GO" id="GO:0031490">
    <property type="term" value="F:chromatin DNA binding"/>
    <property type="evidence" value="ECO:0000318"/>
    <property type="project" value="GO_Central"/>
</dbReference>
<dbReference type="GO" id="GO:0042393">
    <property type="term" value="F:histone binding"/>
    <property type="evidence" value="ECO:0000318"/>
    <property type="project" value="GO_Central"/>
</dbReference>
<dbReference type="GO" id="GO:0043124">
    <property type="term" value="P:negative regulation of canonical NF-kappaB signal transduction"/>
    <property type="evidence" value="ECO:0000250"/>
    <property type="project" value="UniProtKB"/>
</dbReference>
<dbReference type="GO" id="GO:0043409">
    <property type="term" value="P:negative regulation of MAPK cascade"/>
    <property type="evidence" value="ECO:0000250"/>
    <property type="project" value="UniProtKB"/>
</dbReference>
<dbReference type="GO" id="GO:0150079">
    <property type="term" value="P:negative regulation of neuroinflammatory response"/>
    <property type="evidence" value="ECO:0000250"/>
    <property type="project" value="UniProtKB"/>
</dbReference>
<dbReference type="GO" id="GO:0090263">
    <property type="term" value="P:positive regulation of canonical Wnt signaling pathway"/>
    <property type="evidence" value="ECO:0000250"/>
    <property type="project" value="UniProtKB"/>
</dbReference>
<dbReference type="GO" id="GO:2000179">
    <property type="term" value="P:positive regulation of neural precursor cell proliferation"/>
    <property type="evidence" value="ECO:0000250"/>
    <property type="project" value="UniProtKB"/>
</dbReference>
<dbReference type="GO" id="GO:0006355">
    <property type="term" value="P:regulation of DNA-templated transcription"/>
    <property type="evidence" value="ECO:0000318"/>
    <property type="project" value="GO_Central"/>
</dbReference>
<dbReference type="FunFam" id="3.40.50.300:FF:000282">
    <property type="entry name" value="Strawberry notch homolog 1 (Drosophila)"/>
    <property type="match status" value="1"/>
</dbReference>
<dbReference type="Gene3D" id="3.40.50.300">
    <property type="entry name" value="P-loop containing nucleotide triphosphate hydrolases"/>
    <property type="match status" value="1"/>
</dbReference>
<dbReference type="InterPro" id="IPR027417">
    <property type="entry name" value="P-loop_NTPase"/>
</dbReference>
<dbReference type="InterPro" id="IPR026937">
    <property type="entry name" value="SBNO_Helicase_C_dom"/>
</dbReference>
<dbReference type="InterPro" id="IPR026741">
    <property type="entry name" value="SNO"/>
</dbReference>
<dbReference type="InterPro" id="IPR039187">
    <property type="entry name" value="SNO_AAA"/>
</dbReference>
<dbReference type="PANTHER" id="PTHR12706:SF8">
    <property type="entry name" value="PROTEIN STRAWBERRY NOTCH HOMOLOG 1"/>
    <property type="match status" value="1"/>
</dbReference>
<dbReference type="PANTHER" id="PTHR12706">
    <property type="entry name" value="STRAWBERRY NOTCH-RELATED"/>
    <property type="match status" value="1"/>
</dbReference>
<dbReference type="Pfam" id="PF13872">
    <property type="entry name" value="AAA_34"/>
    <property type="match status" value="1"/>
</dbReference>
<dbReference type="Pfam" id="PF13871">
    <property type="entry name" value="Helicase_C_4"/>
    <property type="match status" value="1"/>
</dbReference>
<dbReference type="Pfam" id="PF25373">
    <property type="entry name" value="SBNO"/>
    <property type="match status" value="1"/>
</dbReference>
<dbReference type="SUPFAM" id="SSF52540">
    <property type="entry name" value="P-loop containing nucleoside triphosphate hydrolases"/>
    <property type="match status" value="2"/>
</dbReference>
<name>SBNO1_HUMAN</name>
<reference key="1">
    <citation type="submission" date="1998-05" db="EMBL/GenBank/DDBJ databases">
        <title>Molecular and biological characterization of a new nuclear protein, MOP-3 which is highly expressed in human monocytes.</title>
        <authorList>
            <person name="Takayama K."/>
            <person name="Ukai Y."/>
            <person name="Fujii Y."/>
            <person name="Yoshimoto M."/>
        </authorList>
    </citation>
    <scope>NUCLEOTIDE SEQUENCE [MRNA] (ISOFORM 2)</scope>
    <source>
        <tissue>Blood</tissue>
    </source>
</reference>
<reference key="2">
    <citation type="journal article" date="2004" name="Genome Res.">
        <title>The status, quality, and expansion of the NIH full-length cDNA project: the Mammalian Gene Collection (MGC).</title>
        <authorList>
            <consortium name="The MGC Project Team"/>
        </authorList>
    </citation>
    <scope>NUCLEOTIDE SEQUENCE [LARGE SCALE MRNA] (ISOFORM 1)</scope>
    <scope>NUCLEOTIDE SEQUENCE [LARGE SCALE MRNA] OF 1-793 (ISOFORM 3)</scope>
    <source>
        <tissue>Placenta</tissue>
    </source>
</reference>
<reference key="3">
    <citation type="journal article" date="2004" name="Nat. Genet.">
        <title>Complete sequencing and characterization of 21,243 full-length human cDNAs.</title>
        <authorList>
            <person name="Ota T."/>
            <person name="Suzuki Y."/>
            <person name="Nishikawa T."/>
            <person name="Otsuki T."/>
            <person name="Sugiyama T."/>
            <person name="Irie R."/>
            <person name="Wakamatsu A."/>
            <person name="Hayashi K."/>
            <person name="Sato H."/>
            <person name="Nagai K."/>
            <person name="Kimura K."/>
            <person name="Makita H."/>
            <person name="Sekine M."/>
            <person name="Obayashi M."/>
            <person name="Nishi T."/>
            <person name="Shibahara T."/>
            <person name="Tanaka T."/>
            <person name="Ishii S."/>
            <person name="Yamamoto J."/>
            <person name="Saito K."/>
            <person name="Kawai Y."/>
            <person name="Isono Y."/>
            <person name="Nakamura Y."/>
            <person name="Nagahari K."/>
            <person name="Murakami K."/>
            <person name="Yasuda T."/>
            <person name="Iwayanagi T."/>
            <person name="Wagatsuma M."/>
            <person name="Shiratori A."/>
            <person name="Sudo H."/>
            <person name="Hosoiri T."/>
            <person name="Kaku Y."/>
            <person name="Kodaira H."/>
            <person name="Kondo H."/>
            <person name="Sugawara M."/>
            <person name="Takahashi M."/>
            <person name="Kanda K."/>
            <person name="Yokoi T."/>
            <person name="Furuya T."/>
            <person name="Kikkawa E."/>
            <person name="Omura Y."/>
            <person name="Abe K."/>
            <person name="Kamihara K."/>
            <person name="Katsuta N."/>
            <person name="Sato K."/>
            <person name="Tanikawa M."/>
            <person name="Yamazaki M."/>
            <person name="Ninomiya K."/>
            <person name="Ishibashi T."/>
            <person name="Yamashita H."/>
            <person name="Murakawa K."/>
            <person name="Fujimori K."/>
            <person name="Tanai H."/>
            <person name="Kimata M."/>
            <person name="Watanabe M."/>
            <person name="Hiraoka S."/>
            <person name="Chiba Y."/>
            <person name="Ishida S."/>
            <person name="Ono Y."/>
            <person name="Takiguchi S."/>
            <person name="Watanabe S."/>
            <person name="Yosida M."/>
            <person name="Hotuta T."/>
            <person name="Kusano J."/>
            <person name="Kanehori K."/>
            <person name="Takahashi-Fujii A."/>
            <person name="Hara H."/>
            <person name="Tanase T.-O."/>
            <person name="Nomura Y."/>
            <person name="Togiya S."/>
            <person name="Komai F."/>
            <person name="Hara R."/>
            <person name="Takeuchi K."/>
            <person name="Arita M."/>
            <person name="Imose N."/>
            <person name="Musashino K."/>
            <person name="Yuuki H."/>
            <person name="Oshima A."/>
            <person name="Sasaki N."/>
            <person name="Aotsuka S."/>
            <person name="Yoshikawa Y."/>
            <person name="Matsunawa H."/>
            <person name="Ichihara T."/>
            <person name="Shiohata N."/>
            <person name="Sano S."/>
            <person name="Moriya S."/>
            <person name="Momiyama H."/>
            <person name="Satoh N."/>
            <person name="Takami S."/>
            <person name="Terashima Y."/>
            <person name="Suzuki O."/>
            <person name="Nakagawa S."/>
            <person name="Senoh A."/>
            <person name="Mizoguchi H."/>
            <person name="Goto Y."/>
            <person name="Shimizu F."/>
            <person name="Wakebe H."/>
            <person name="Hishigaki H."/>
            <person name="Watanabe T."/>
            <person name="Sugiyama A."/>
            <person name="Takemoto M."/>
            <person name="Kawakami B."/>
            <person name="Yamazaki M."/>
            <person name="Watanabe K."/>
            <person name="Kumagai A."/>
            <person name="Itakura S."/>
            <person name="Fukuzumi Y."/>
            <person name="Fujimori Y."/>
            <person name="Komiyama M."/>
            <person name="Tashiro H."/>
            <person name="Tanigami A."/>
            <person name="Fujiwara T."/>
            <person name="Ono T."/>
            <person name="Yamada K."/>
            <person name="Fujii Y."/>
            <person name="Ozaki K."/>
            <person name="Hirao M."/>
            <person name="Ohmori Y."/>
            <person name="Kawabata A."/>
            <person name="Hikiji T."/>
            <person name="Kobatake N."/>
            <person name="Inagaki H."/>
            <person name="Ikema Y."/>
            <person name="Okamoto S."/>
            <person name="Okitani R."/>
            <person name="Kawakami T."/>
            <person name="Noguchi S."/>
            <person name="Itoh T."/>
            <person name="Shigeta K."/>
            <person name="Senba T."/>
            <person name="Matsumura K."/>
            <person name="Nakajima Y."/>
            <person name="Mizuno T."/>
            <person name="Morinaga M."/>
            <person name="Sasaki M."/>
            <person name="Togashi T."/>
            <person name="Oyama M."/>
            <person name="Hata H."/>
            <person name="Watanabe M."/>
            <person name="Komatsu T."/>
            <person name="Mizushima-Sugano J."/>
            <person name="Satoh T."/>
            <person name="Shirai Y."/>
            <person name="Takahashi Y."/>
            <person name="Nakagawa K."/>
            <person name="Okumura K."/>
            <person name="Nagase T."/>
            <person name="Nomura N."/>
            <person name="Kikuchi H."/>
            <person name="Masuho Y."/>
            <person name="Yamashita R."/>
            <person name="Nakai K."/>
            <person name="Yada T."/>
            <person name="Nakamura Y."/>
            <person name="Ohara O."/>
            <person name="Isogai T."/>
            <person name="Sugano S."/>
        </authorList>
    </citation>
    <scope>NUCLEOTIDE SEQUENCE [LARGE SCALE MRNA] OF 1-783 (ISOFORM 2)</scope>
    <source>
        <tissue>Teratocarcinoma</tissue>
    </source>
</reference>
<reference key="4">
    <citation type="journal article" date="2006" name="BMC Genomics">
        <title>NovelFam3000 -- uncharacterized human protein domains conserved across model organisms.</title>
        <authorList>
            <person name="Kemmer D."/>
            <person name="Podowski R.M."/>
            <person name="Arenillas D."/>
            <person name="Lim J."/>
            <person name="Hodges E."/>
            <person name="Roth P."/>
            <person name="Sonnhammer E.L.L."/>
            <person name="Hoeoeg C."/>
            <person name="Wasserman W.W."/>
        </authorList>
    </citation>
    <scope>NUCLEOTIDE SEQUENCE [MRNA] OF 2-1393 (ISOFORM 4)</scope>
</reference>
<reference key="5">
    <citation type="journal article" date="2006" name="Cell">
        <title>Global, in vivo, and site-specific phosphorylation dynamics in signaling networks.</title>
        <authorList>
            <person name="Olsen J.V."/>
            <person name="Blagoev B."/>
            <person name="Gnad F."/>
            <person name="Macek B."/>
            <person name="Kumar C."/>
            <person name="Mortensen P."/>
            <person name="Mann M."/>
        </authorList>
    </citation>
    <scope>PHOSPHORYLATION [LARGE SCALE ANALYSIS] AT SER-697</scope>
    <scope>IDENTIFICATION BY MASS SPECTROMETRY [LARGE SCALE ANALYSIS]</scope>
    <source>
        <tissue>Cervix carcinoma</tissue>
    </source>
</reference>
<reference key="6">
    <citation type="journal article" date="2008" name="Proc. Natl. Acad. Sci. U.S.A.">
        <title>A quantitative atlas of mitotic phosphorylation.</title>
        <authorList>
            <person name="Dephoure N."/>
            <person name="Zhou C."/>
            <person name="Villen J."/>
            <person name="Beausoleil S.A."/>
            <person name="Bakalarski C.E."/>
            <person name="Elledge S.J."/>
            <person name="Gygi S.P."/>
        </authorList>
    </citation>
    <scope>PHOSPHORYLATION [LARGE SCALE ANALYSIS] AT SER-214 AND SER-794</scope>
    <scope>IDENTIFICATION BY MASS SPECTROMETRY [LARGE SCALE ANALYSIS]</scope>
    <source>
        <tissue>Cervix carcinoma</tissue>
    </source>
</reference>
<reference key="7">
    <citation type="journal article" date="2009" name="Sci. Signal.">
        <title>Quantitative phosphoproteomic analysis of T cell receptor signaling reveals system-wide modulation of protein-protein interactions.</title>
        <authorList>
            <person name="Mayya V."/>
            <person name="Lundgren D.H."/>
            <person name="Hwang S.-I."/>
            <person name="Rezaul K."/>
            <person name="Wu L."/>
            <person name="Eng J.K."/>
            <person name="Rodionov V."/>
            <person name="Han D.K."/>
        </authorList>
    </citation>
    <scope>PHOSPHORYLATION [LARGE SCALE ANALYSIS] AT SER-794 AND SER-815</scope>
    <scope>IDENTIFICATION BY MASS SPECTROMETRY [LARGE SCALE ANALYSIS]</scope>
    <source>
        <tissue>Leukemic T-cell</tissue>
    </source>
</reference>
<reference key="8">
    <citation type="journal article" date="2009" name="Science">
        <title>Lysine acetylation targets protein complexes and co-regulates major cellular functions.</title>
        <authorList>
            <person name="Choudhary C."/>
            <person name="Kumar C."/>
            <person name="Gnad F."/>
            <person name="Nielsen M.L."/>
            <person name="Rehman M."/>
            <person name="Walther T.C."/>
            <person name="Olsen J.V."/>
            <person name="Mann M."/>
        </authorList>
    </citation>
    <scope>ACETYLATION [LARGE SCALE ANALYSIS] AT LYS-149; LYS-413 AND LYS-1222</scope>
    <scope>IDENTIFICATION BY MASS SPECTROMETRY [LARGE SCALE ANALYSIS]</scope>
</reference>
<reference key="9">
    <citation type="journal article" date="2010" name="Sci. Signal.">
        <title>Quantitative phosphoproteomics reveals widespread full phosphorylation site occupancy during mitosis.</title>
        <authorList>
            <person name="Olsen J.V."/>
            <person name="Vermeulen M."/>
            <person name="Santamaria A."/>
            <person name="Kumar C."/>
            <person name="Miller M.L."/>
            <person name="Jensen L.J."/>
            <person name="Gnad F."/>
            <person name="Cox J."/>
            <person name="Jensen T.S."/>
            <person name="Nigg E.A."/>
            <person name="Brunak S."/>
            <person name="Mann M."/>
        </authorList>
    </citation>
    <scope>PHOSPHORYLATION [LARGE SCALE ANALYSIS] AT SER-754; SER-755 AND SER-794</scope>
    <scope>IDENTIFICATION BY MASS SPECTROMETRY [LARGE SCALE ANALYSIS]</scope>
    <source>
        <tissue>Cervix carcinoma</tissue>
    </source>
</reference>
<reference key="10">
    <citation type="journal article" date="2011" name="BMC Syst. Biol.">
        <title>Initial characterization of the human central proteome.</title>
        <authorList>
            <person name="Burkard T.R."/>
            <person name="Planyavsky M."/>
            <person name="Kaupe I."/>
            <person name="Breitwieser F.P."/>
            <person name="Buerckstuemmer T."/>
            <person name="Bennett K.L."/>
            <person name="Superti-Furga G."/>
            <person name="Colinge J."/>
        </authorList>
    </citation>
    <scope>IDENTIFICATION BY MASS SPECTROMETRY [LARGE SCALE ANALYSIS]</scope>
</reference>
<reference key="11">
    <citation type="journal article" date="2011" name="Sci. Signal.">
        <title>System-wide temporal characterization of the proteome and phosphoproteome of human embryonic stem cell differentiation.</title>
        <authorList>
            <person name="Rigbolt K.T."/>
            <person name="Prokhorova T.A."/>
            <person name="Akimov V."/>
            <person name="Henningsen J."/>
            <person name="Johansen P.T."/>
            <person name="Kratchmarova I."/>
            <person name="Kassem M."/>
            <person name="Mann M."/>
            <person name="Olsen J.V."/>
            <person name="Blagoev B."/>
        </authorList>
    </citation>
    <scope>PHOSPHORYLATION [LARGE SCALE ANALYSIS] AT SER-754 AND SER-755</scope>
    <scope>IDENTIFICATION BY MASS SPECTROMETRY [LARGE SCALE ANALYSIS]</scope>
</reference>
<reference key="12">
    <citation type="journal article" date="2013" name="J. Proteome Res.">
        <title>Toward a comprehensive characterization of a human cancer cell phosphoproteome.</title>
        <authorList>
            <person name="Zhou H."/>
            <person name="Di Palma S."/>
            <person name="Preisinger C."/>
            <person name="Peng M."/>
            <person name="Polat A.N."/>
            <person name="Heck A.J."/>
            <person name="Mohammed S."/>
        </authorList>
    </citation>
    <scope>PHOSPHORYLATION [LARGE SCALE ANALYSIS] AT SER-148; SER-162; SER-794 AND SER-1386</scope>
    <scope>IDENTIFICATION BY MASS SPECTROMETRY [LARGE SCALE ANALYSIS]</scope>
    <source>
        <tissue>Cervix carcinoma</tissue>
        <tissue>Erythroleukemia</tissue>
    </source>
</reference>
<reference key="13">
    <citation type="journal article" date="2006" name="Science">
        <title>The consensus coding sequences of human breast and colorectal cancers.</title>
        <authorList>
            <person name="Sjoeblom T."/>
            <person name="Jones S."/>
            <person name="Wood L.D."/>
            <person name="Parsons D.W."/>
            <person name="Lin J."/>
            <person name="Barber T.D."/>
            <person name="Mandelker D."/>
            <person name="Leary R.J."/>
            <person name="Ptak J."/>
            <person name="Silliman N."/>
            <person name="Szabo S."/>
            <person name="Buckhaults P."/>
            <person name="Farrell C."/>
            <person name="Meeh P."/>
            <person name="Markowitz S.D."/>
            <person name="Willis J."/>
            <person name="Dawson D."/>
            <person name="Willson J.K.V."/>
            <person name="Gazdar A.F."/>
            <person name="Hartigan J."/>
            <person name="Wu L."/>
            <person name="Liu C."/>
            <person name="Parmigiani G."/>
            <person name="Park B.H."/>
            <person name="Bachman K.E."/>
            <person name="Papadopoulos N."/>
            <person name="Vogelstein B."/>
            <person name="Kinzler K.W."/>
            <person name="Velculescu V.E."/>
        </authorList>
    </citation>
    <scope>VARIANTS [LARGE SCALE ANALYSIS] SER-634; LYS-889 AND CYS-997</scope>
</reference>
<gene>
    <name type="primary">SBNO1</name>
    <name type="synonym">MOP3</name>
</gene>
<feature type="chain" id="PRO_0000314555" description="Protein strawberry notch homolog 1">
    <location>
        <begin position="1"/>
        <end position="1393"/>
    </location>
</feature>
<feature type="region of interest" description="Disordered" evidence="3">
    <location>
        <begin position="129"/>
        <end position="148"/>
    </location>
</feature>
<feature type="region of interest" description="Disordered" evidence="3">
    <location>
        <begin position="687"/>
        <end position="840"/>
    </location>
</feature>
<feature type="coiled-coil region" evidence="2">
    <location>
        <begin position="843"/>
        <end position="870"/>
    </location>
</feature>
<feature type="compositionally biased region" description="Basic and acidic residues" evidence="3">
    <location>
        <begin position="697"/>
        <end position="716"/>
    </location>
</feature>
<feature type="compositionally biased region" description="Acidic residues" evidence="3">
    <location>
        <begin position="733"/>
        <end position="747"/>
    </location>
</feature>
<feature type="compositionally biased region" description="Acidic residues" evidence="3">
    <location>
        <begin position="756"/>
        <end position="775"/>
    </location>
</feature>
<feature type="compositionally biased region" description="Basic residues" evidence="3">
    <location>
        <begin position="781"/>
        <end position="793"/>
    </location>
</feature>
<feature type="compositionally biased region" description="Low complexity" evidence="3">
    <location>
        <begin position="824"/>
        <end position="840"/>
    </location>
</feature>
<feature type="modified residue" description="Phosphoserine" evidence="16">
    <location>
        <position position="148"/>
    </location>
</feature>
<feature type="modified residue" description="N6-acetyllysine" evidence="12">
    <location>
        <position position="149"/>
    </location>
</feature>
<feature type="modified residue" description="Phosphoserine" evidence="16">
    <location>
        <position position="162"/>
    </location>
</feature>
<feature type="modified residue" description="Phosphoserine" evidence="11">
    <location>
        <position position="214"/>
    </location>
</feature>
<feature type="modified residue" description="N6-acetyllysine" evidence="12">
    <location>
        <position position="413"/>
    </location>
</feature>
<feature type="modified residue" description="Phosphoserine" evidence="1">
    <location>
        <position position="692"/>
    </location>
</feature>
<feature type="modified residue" description="Phosphoserine" evidence="1">
    <location>
        <position position="693"/>
    </location>
</feature>
<feature type="modified residue" description="Phosphoserine" evidence="10">
    <location>
        <position position="697"/>
    </location>
</feature>
<feature type="modified residue" description="Phosphoserine" evidence="14 15">
    <location>
        <position position="754"/>
    </location>
</feature>
<feature type="modified residue" description="Phosphoserine" evidence="14 15">
    <location>
        <position position="755"/>
    </location>
</feature>
<feature type="modified residue" description="Phosphoserine" evidence="1">
    <location>
        <position position="768"/>
    </location>
</feature>
<feature type="modified residue" description="Phosphoserine" evidence="11 13 14 16">
    <location>
        <position position="794"/>
    </location>
</feature>
<feature type="modified residue" description="Phosphoserine" evidence="13">
    <location>
        <position position="815"/>
    </location>
</feature>
<feature type="modified residue" description="N6-acetyllysine" evidence="12">
    <location>
        <position position="1222"/>
    </location>
</feature>
<feature type="modified residue" description="Phosphoserine" evidence="16">
    <location>
        <position position="1386"/>
    </location>
</feature>
<feature type="splice variant" id="VSP_030295" description="In isoform 3." evidence="6">
    <location>
        <begin position="78"/>
        <end position="79"/>
    </location>
</feature>
<feature type="splice variant" id="VSP_030296" description="In isoform 2 and isoform 4." evidence="5 7 8">
    <original>QQ</original>
    <variation>Q</variation>
    <location>
        <begin position="80"/>
        <end position="81"/>
    </location>
</feature>
<feature type="splice variant" id="VSP_030297" description="In isoform 4." evidence="7">
    <original>VGGLTGSSSDDS</original>
    <variation>MSLMRMMKMIPG</variation>
    <location>
        <begin position="722"/>
        <end position="733"/>
    </location>
</feature>
<feature type="splice variant" id="VSP_030298" description="In isoform 4." evidence="7">
    <location>
        <begin position="734"/>
        <end position="1393"/>
    </location>
</feature>
<feature type="sequence variant" id="VAR_037910" description="In a breast cancer sample; somatic mutation." evidence="4">
    <original>T</original>
    <variation>S</variation>
    <location>
        <position position="634"/>
    </location>
</feature>
<feature type="sequence variant" id="VAR_037911" description="In dbSNP:rs1060105.">
    <original>S</original>
    <variation>N</variation>
    <location>
        <position position="728"/>
    </location>
</feature>
<feature type="sequence variant" id="VAR_057794" description="In dbSNP:rs1060105.">
    <original>S</original>
    <variation>N</variation>
    <location>
        <position position="729"/>
    </location>
</feature>
<feature type="sequence variant" id="VAR_037912" description="In a breast cancer sample; somatic mutation." evidence="4">
    <original>E</original>
    <variation>K</variation>
    <location>
        <position position="889"/>
    </location>
</feature>
<feature type="sequence variant" id="VAR_037913" description="In a breast cancer sample; somatic mutation." evidence="4">
    <original>S</original>
    <variation>C</variation>
    <location>
        <position position="997"/>
    </location>
</feature>
<feature type="sequence conflict" description="In Ref. 4; AAQ76814." evidence="9" ref="4">
    <original>P</original>
    <variation>Q</variation>
    <location>
        <position position="4"/>
    </location>
</feature>
<feature type="sequence conflict" description="In Ref. 3; BAA91842." evidence="9" ref="3">
    <original>S</original>
    <variation>R</variation>
    <location>
        <position position="14"/>
    </location>
</feature>
<feature type="sequence conflict" description="In Ref. 4; AAQ76814." evidence="9" ref="4">
    <original>V</original>
    <variation>A</variation>
    <location>
        <position position="555"/>
    </location>
</feature>
<feature type="sequence conflict" description="In Ref. 1; BAB19784." evidence="9" ref="1">
    <original>N</original>
    <variation>S</variation>
    <location>
        <position position="774"/>
    </location>
</feature>
<evidence type="ECO:0000250" key="1">
    <source>
        <dbReference type="UniProtKB" id="Q689Z5"/>
    </source>
</evidence>
<evidence type="ECO:0000255" key="2"/>
<evidence type="ECO:0000256" key="3">
    <source>
        <dbReference type="SAM" id="MobiDB-lite"/>
    </source>
</evidence>
<evidence type="ECO:0000269" key="4">
    <source>
    </source>
</evidence>
<evidence type="ECO:0000303" key="5">
    <source>
    </source>
</evidence>
<evidence type="ECO:0000303" key="6">
    <source>
    </source>
</evidence>
<evidence type="ECO:0000303" key="7">
    <source>
    </source>
</evidence>
<evidence type="ECO:0000303" key="8">
    <source ref="1"/>
</evidence>
<evidence type="ECO:0000305" key="9"/>
<evidence type="ECO:0007744" key="10">
    <source>
    </source>
</evidence>
<evidence type="ECO:0007744" key="11">
    <source>
    </source>
</evidence>
<evidence type="ECO:0007744" key="12">
    <source>
    </source>
</evidence>
<evidence type="ECO:0007744" key="13">
    <source>
    </source>
</evidence>
<evidence type="ECO:0007744" key="14">
    <source>
    </source>
</evidence>
<evidence type="ECO:0007744" key="15">
    <source>
    </source>
</evidence>
<evidence type="ECO:0007744" key="16">
    <source>
    </source>
</evidence>
<accession>A3KN83</accession>
<accession>Q05C06</accession>
<accession>Q3ZTS3</accession>
<accession>Q9H3T8</accession>
<accession>Q9NVB2</accession>
<keyword id="KW-0007">Acetylation</keyword>
<keyword id="KW-0025">Alternative splicing</keyword>
<keyword id="KW-0175">Coiled coil</keyword>
<keyword id="KW-0395">Inflammatory response</keyword>
<keyword id="KW-0539">Nucleus</keyword>
<keyword id="KW-0597">Phosphoprotein</keyword>
<keyword id="KW-1267">Proteomics identification</keyword>
<keyword id="KW-1185">Reference proteome</keyword>
<keyword id="KW-0879">Wnt signaling pathway</keyword>
<proteinExistence type="evidence at protein level"/>